<protein>
    <recommendedName>
        <fullName evidence="1">Small ribosomal subunit protein bS20</fullName>
    </recommendedName>
    <alternativeName>
        <fullName evidence="3">30S ribosomal protein S20</fullName>
    </alternativeName>
</protein>
<reference key="1">
    <citation type="journal article" date="2004" name="Nat. Biotechnol.">
        <title>Complete sequence and comparative genome analysis of the dairy bacterium Streptococcus thermophilus.</title>
        <authorList>
            <person name="Bolotin A."/>
            <person name="Quinquis B."/>
            <person name="Renault P."/>
            <person name="Sorokin A."/>
            <person name="Ehrlich S.D."/>
            <person name="Kulakauskas S."/>
            <person name="Lapidus A."/>
            <person name="Goltsman E."/>
            <person name="Mazur M."/>
            <person name="Pusch G.D."/>
            <person name="Fonstein M."/>
            <person name="Overbeek R."/>
            <person name="Kyprides N."/>
            <person name="Purnelle B."/>
            <person name="Prozzi D."/>
            <person name="Ngui K."/>
            <person name="Masuy D."/>
            <person name="Hancy F."/>
            <person name="Burteau S."/>
            <person name="Boutry M."/>
            <person name="Delcour J."/>
            <person name="Goffeau A."/>
            <person name="Hols P."/>
        </authorList>
    </citation>
    <scope>NUCLEOTIDE SEQUENCE [LARGE SCALE GENOMIC DNA]</scope>
    <source>
        <strain>CNRZ 1066</strain>
    </source>
</reference>
<gene>
    <name evidence="1" type="primary">rpsT</name>
    <name type="ordered locus">str0798</name>
</gene>
<organism>
    <name type="scientific">Streptococcus thermophilus (strain CNRZ 1066)</name>
    <dbReference type="NCBI Taxonomy" id="299768"/>
    <lineage>
        <taxon>Bacteria</taxon>
        <taxon>Bacillati</taxon>
        <taxon>Bacillota</taxon>
        <taxon>Bacilli</taxon>
        <taxon>Lactobacillales</taxon>
        <taxon>Streptococcaceae</taxon>
        <taxon>Streptococcus</taxon>
    </lineage>
</organism>
<keyword id="KW-0687">Ribonucleoprotein</keyword>
<keyword id="KW-0689">Ribosomal protein</keyword>
<keyword id="KW-0694">RNA-binding</keyword>
<keyword id="KW-0699">rRNA-binding</keyword>
<feature type="chain" id="PRO_0000168041" description="Small ribosomal subunit protein bS20">
    <location>
        <begin position="1"/>
        <end position="83"/>
    </location>
</feature>
<feature type="region of interest" description="Disordered" evidence="2">
    <location>
        <begin position="60"/>
        <end position="83"/>
    </location>
</feature>
<comment type="function">
    <text evidence="1">Binds directly to 16S ribosomal RNA.</text>
</comment>
<comment type="similarity">
    <text evidence="1">Belongs to the bacterial ribosomal protein bS20 family.</text>
</comment>
<name>RS20_STRT1</name>
<sequence>MEVKTLANIKSAIKRAELNVKQNEKNSAQKSALRTVIKAFKANPTEEAFRAASASIDKAASKGLIHKNKASRDKSRLAAKLAN</sequence>
<evidence type="ECO:0000255" key="1">
    <source>
        <dbReference type="HAMAP-Rule" id="MF_00500"/>
    </source>
</evidence>
<evidence type="ECO:0000256" key="2">
    <source>
        <dbReference type="SAM" id="MobiDB-lite"/>
    </source>
</evidence>
<evidence type="ECO:0000305" key="3"/>
<dbReference type="EMBL" id="CP000024">
    <property type="protein sequence ID" value="AAV62391.1"/>
    <property type="molecule type" value="Genomic_DNA"/>
</dbReference>
<dbReference type="SMR" id="Q5M080"/>
<dbReference type="KEGG" id="stc:str0798"/>
<dbReference type="HOGENOM" id="CLU_160655_1_1_9"/>
<dbReference type="GO" id="GO:0005829">
    <property type="term" value="C:cytosol"/>
    <property type="evidence" value="ECO:0007669"/>
    <property type="project" value="TreeGrafter"/>
</dbReference>
<dbReference type="GO" id="GO:0015935">
    <property type="term" value="C:small ribosomal subunit"/>
    <property type="evidence" value="ECO:0007669"/>
    <property type="project" value="TreeGrafter"/>
</dbReference>
<dbReference type="GO" id="GO:0070181">
    <property type="term" value="F:small ribosomal subunit rRNA binding"/>
    <property type="evidence" value="ECO:0007669"/>
    <property type="project" value="TreeGrafter"/>
</dbReference>
<dbReference type="GO" id="GO:0003735">
    <property type="term" value="F:structural constituent of ribosome"/>
    <property type="evidence" value="ECO:0007669"/>
    <property type="project" value="InterPro"/>
</dbReference>
<dbReference type="GO" id="GO:0006412">
    <property type="term" value="P:translation"/>
    <property type="evidence" value="ECO:0007669"/>
    <property type="project" value="UniProtKB-UniRule"/>
</dbReference>
<dbReference type="FunFam" id="1.20.58.110:FF:000001">
    <property type="entry name" value="30S ribosomal protein S20"/>
    <property type="match status" value="1"/>
</dbReference>
<dbReference type="Gene3D" id="1.20.58.110">
    <property type="entry name" value="Ribosomal protein S20"/>
    <property type="match status" value="1"/>
</dbReference>
<dbReference type="HAMAP" id="MF_00500">
    <property type="entry name" value="Ribosomal_bS20"/>
    <property type="match status" value="1"/>
</dbReference>
<dbReference type="InterPro" id="IPR002583">
    <property type="entry name" value="Ribosomal_bS20"/>
</dbReference>
<dbReference type="InterPro" id="IPR036510">
    <property type="entry name" value="Ribosomal_bS20_sf"/>
</dbReference>
<dbReference type="NCBIfam" id="TIGR00029">
    <property type="entry name" value="S20"/>
    <property type="match status" value="1"/>
</dbReference>
<dbReference type="PANTHER" id="PTHR33398">
    <property type="entry name" value="30S RIBOSOMAL PROTEIN S20"/>
    <property type="match status" value="1"/>
</dbReference>
<dbReference type="PANTHER" id="PTHR33398:SF1">
    <property type="entry name" value="SMALL RIBOSOMAL SUBUNIT PROTEIN BS20C"/>
    <property type="match status" value="1"/>
</dbReference>
<dbReference type="Pfam" id="PF01649">
    <property type="entry name" value="Ribosomal_S20p"/>
    <property type="match status" value="1"/>
</dbReference>
<dbReference type="SUPFAM" id="SSF46992">
    <property type="entry name" value="Ribosomal protein S20"/>
    <property type="match status" value="1"/>
</dbReference>
<accession>Q5M080</accession>
<proteinExistence type="inferred from homology"/>